<gene>
    <name evidence="5" type="primary">Sftpc</name>
    <name type="synonym">Sftp2</name>
</gene>
<organism>
    <name type="scientific">Rattus norvegicus</name>
    <name type="common">Rat</name>
    <dbReference type="NCBI Taxonomy" id="10116"/>
    <lineage>
        <taxon>Eukaryota</taxon>
        <taxon>Metazoa</taxon>
        <taxon>Chordata</taxon>
        <taxon>Craniata</taxon>
        <taxon>Vertebrata</taxon>
        <taxon>Euteleostomi</taxon>
        <taxon>Mammalia</taxon>
        <taxon>Eutheria</taxon>
        <taxon>Euarchontoglires</taxon>
        <taxon>Glires</taxon>
        <taxon>Rodentia</taxon>
        <taxon>Myomorpha</taxon>
        <taxon>Muroidea</taxon>
        <taxon>Muridae</taxon>
        <taxon>Murinae</taxon>
        <taxon>Rattus</taxon>
    </lineage>
</organism>
<dbReference type="EMBL" id="X14221">
    <property type="protein sequence ID" value="CAA32440.1"/>
    <property type="molecule type" value="mRNA"/>
</dbReference>
<dbReference type="EMBL" id="U07796">
    <property type="protein sequence ID" value="AAA92788.1"/>
    <property type="molecule type" value="Genomic_DNA"/>
</dbReference>
<dbReference type="EMBL" id="BC072693">
    <property type="protein sequence ID" value="AAH72693.1"/>
    <property type="molecule type" value="mRNA"/>
</dbReference>
<dbReference type="PIR" id="S03994">
    <property type="entry name" value="LNRTC"/>
</dbReference>
<dbReference type="RefSeq" id="NP_059038.1">
    <property type="nucleotide sequence ID" value="NM_017342.2"/>
</dbReference>
<dbReference type="SMR" id="P11685"/>
<dbReference type="FunCoup" id="P11685">
    <property type="interactions" value="22"/>
</dbReference>
<dbReference type="STRING" id="10116.ENSRNOP00000015032"/>
<dbReference type="GlyGen" id="P11685">
    <property type="glycosylation" value="2 sites"/>
</dbReference>
<dbReference type="PhosphoSitePlus" id="P11685"/>
<dbReference type="PaxDb" id="10116-ENSRNOP00000015032"/>
<dbReference type="GeneID" id="50683"/>
<dbReference type="KEGG" id="rno:50683"/>
<dbReference type="UCSC" id="RGD:3666">
    <property type="organism name" value="rat"/>
</dbReference>
<dbReference type="AGR" id="RGD:3666"/>
<dbReference type="CTD" id="6440"/>
<dbReference type="RGD" id="3666">
    <property type="gene designation" value="Sftpc"/>
</dbReference>
<dbReference type="eggNOG" id="ENOG502S6QH">
    <property type="taxonomic scope" value="Eukaryota"/>
</dbReference>
<dbReference type="HOGENOM" id="CLU_087015_0_0_1"/>
<dbReference type="InParanoid" id="P11685"/>
<dbReference type="OrthoDB" id="45502at9989"/>
<dbReference type="PhylomeDB" id="P11685"/>
<dbReference type="TreeFam" id="TF337317"/>
<dbReference type="Reactome" id="R-RNO-5683826">
    <property type="pathway name" value="Surfactant metabolism"/>
</dbReference>
<dbReference type="PRO" id="PR:P11685"/>
<dbReference type="Proteomes" id="UP000002494">
    <property type="component" value="Unplaced"/>
</dbReference>
<dbReference type="GO" id="GO:0097208">
    <property type="term" value="C:alveolar lamellar body"/>
    <property type="evidence" value="ECO:0000314"/>
    <property type="project" value="RGD"/>
</dbReference>
<dbReference type="GO" id="GO:0005737">
    <property type="term" value="C:cytoplasm"/>
    <property type="evidence" value="ECO:0000266"/>
    <property type="project" value="RGD"/>
</dbReference>
<dbReference type="GO" id="GO:0005576">
    <property type="term" value="C:extracellular region"/>
    <property type="evidence" value="ECO:0000266"/>
    <property type="project" value="RGD"/>
</dbReference>
<dbReference type="GO" id="GO:0005615">
    <property type="term" value="C:extracellular space"/>
    <property type="evidence" value="ECO:0000314"/>
    <property type="project" value="RGD"/>
</dbReference>
<dbReference type="GO" id="GO:0005771">
    <property type="term" value="C:multivesicular body"/>
    <property type="evidence" value="ECO:0000314"/>
    <property type="project" value="RGD"/>
</dbReference>
<dbReference type="GO" id="GO:0042802">
    <property type="term" value="F:identical protein binding"/>
    <property type="evidence" value="ECO:0000353"/>
    <property type="project" value="RGD"/>
</dbReference>
<dbReference type="GO" id="GO:0071260">
    <property type="term" value="P:cellular response to mechanical stimulus"/>
    <property type="evidence" value="ECO:0000270"/>
    <property type="project" value="RGD"/>
</dbReference>
<dbReference type="GO" id="GO:0071732">
    <property type="term" value="P:cellular response to nitric oxide"/>
    <property type="evidence" value="ECO:0000270"/>
    <property type="project" value="RGD"/>
</dbReference>
<dbReference type="GO" id="GO:0007623">
    <property type="term" value="P:circadian rhythm"/>
    <property type="evidence" value="ECO:0000270"/>
    <property type="project" value="RGD"/>
</dbReference>
<dbReference type="GO" id="GO:0007585">
    <property type="term" value="P:respiratory gaseous exchange by respiratory system"/>
    <property type="evidence" value="ECO:0007669"/>
    <property type="project" value="UniProtKB-KW"/>
</dbReference>
<dbReference type="GO" id="GO:0051591">
    <property type="term" value="P:response to cAMP"/>
    <property type="evidence" value="ECO:0000270"/>
    <property type="project" value="RGD"/>
</dbReference>
<dbReference type="GO" id="GO:0051384">
    <property type="term" value="P:response to glucocorticoid"/>
    <property type="evidence" value="ECO:0000270"/>
    <property type="project" value="RGD"/>
</dbReference>
<dbReference type="GO" id="GO:0009749">
    <property type="term" value="P:response to glucose"/>
    <property type="evidence" value="ECO:0000270"/>
    <property type="project" value="RGD"/>
</dbReference>
<dbReference type="GO" id="GO:0070848">
    <property type="term" value="P:response to growth factor"/>
    <property type="evidence" value="ECO:0000270"/>
    <property type="project" value="RGD"/>
</dbReference>
<dbReference type="GO" id="GO:0009725">
    <property type="term" value="P:response to hormone"/>
    <property type="evidence" value="ECO:0000270"/>
    <property type="project" value="RGD"/>
</dbReference>
<dbReference type="GO" id="GO:0055093">
    <property type="term" value="P:response to hyperoxia"/>
    <property type="evidence" value="ECO:0000270"/>
    <property type="project" value="RGD"/>
</dbReference>
<dbReference type="GO" id="GO:0070741">
    <property type="term" value="P:response to interleukin-6"/>
    <property type="evidence" value="ECO:0000270"/>
    <property type="project" value="RGD"/>
</dbReference>
<dbReference type="GO" id="GO:0032496">
    <property type="term" value="P:response to lipopolysaccharide"/>
    <property type="evidence" value="ECO:0000270"/>
    <property type="project" value="RGD"/>
</dbReference>
<dbReference type="GO" id="GO:0032526">
    <property type="term" value="P:response to retinoic acid"/>
    <property type="evidence" value="ECO:0000270"/>
    <property type="project" value="RGD"/>
</dbReference>
<dbReference type="GO" id="GO:0033189">
    <property type="term" value="P:response to vitamin A"/>
    <property type="evidence" value="ECO:0000270"/>
    <property type="project" value="RGD"/>
</dbReference>
<dbReference type="Gene3D" id="3.30.390.150">
    <property type="match status" value="1"/>
</dbReference>
<dbReference type="InterPro" id="IPR007084">
    <property type="entry name" value="BRICHOS_dom"/>
</dbReference>
<dbReference type="InterPro" id="IPR001729">
    <property type="entry name" value="SP-C"/>
</dbReference>
<dbReference type="InterPro" id="IPR018051">
    <property type="entry name" value="SP-C_palmitoylation_site"/>
</dbReference>
<dbReference type="InterPro" id="IPR015091">
    <property type="entry name" value="Surfactant_protein_propep"/>
</dbReference>
<dbReference type="PANTHER" id="PTHR10800">
    <property type="entry name" value="PULMONARY SURFACTANT-ASSOCIATED PROTEIN C"/>
    <property type="match status" value="1"/>
</dbReference>
<dbReference type="PANTHER" id="PTHR10800:SF4">
    <property type="entry name" value="PULMONARY SURFACTANT-ASSOCIATED PROTEIN C"/>
    <property type="match status" value="1"/>
</dbReference>
<dbReference type="Pfam" id="PF04089">
    <property type="entry name" value="BRICHOS"/>
    <property type="match status" value="1"/>
</dbReference>
<dbReference type="Pfam" id="PF08999">
    <property type="entry name" value="SP_C-Propep"/>
    <property type="match status" value="1"/>
</dbReference>
<dbReference type="SMART" id="SM01039">
    <property type="entry name" value="BRICHOS"/>
    <property type="match status" value="1"/>
</dbReference>
<dbReference type="SMART" id="SM00019">
    <property type="entry name" value="SF_P"/>
    <property type="match status" value="1"/>
</dbReference>
<dbReference type="PROSITE" id="PS50869">
    <property type="entry name" value="BRICHOS"/>
    <property type="match status" value="1"/>
</dbReference>
<dbReference type="PROSITE" id="PS00341">
    <property type="entry name" value="SURFACT_PALMITOYL"/>
    <property type="match status" value="1"/>
</dbReference>
<comment type="function">
    <text>Pulmonary surfactant associated proteins promote alveolar stability by lowering the surface tension at the air-liquid interface in the peripheral air spaces.</text>
</comment>
<comment type="subcellular location">
    <subcellularLocation>
        <location>Secreted</location>
        <location>Extracellular space</location>
        <location>Surface film</location>
    </subcellularLocation>
</comment>
<comment type="miscellaneous">
    <text>Pulmonary surfactant consists of 90% lipid and 10% protein. There are 4 surfactant-associated proteins: 2 collagenous, carbohydrate-binding glycoproteins (SP-A and SP-D) and 2 small hydrophobic proteins (SP-B and SP-C).</text>
</comment>
<protein>
    <recommendedName>
        <fullName evidence="5">Surfactant protein C</fullName>
        <shortName>SP-C</shortName>
    </recommendedName>
    <alternativeName>
        <fullName>Pulmonary surfactant-associated protein C</fullName>
    </alternativeName>
    <alternativeName>
        <fullName>Pulmonary surfactant-associated proteolipid SPL(Val)</fullName>
    </alternativeName>
</protein>
<keyword id="KW-1015">Disulfide bond</keyword>
<keyword id="KW-0305">Gaseous exchange</keyword>
<keyword id="KW-0449">Lipoprotein</keyword>
<keyword id="KW-0564">Palmitate</keyword>
<keyword id="KW-1185">Reference proteome</keyword>
<keyword id="KW-0964">Secreted</keyword>
<keyword id="KW-0767">Surface film</keyword>
<reference key="1">
    <citation type="journal article" date="1989" name="Biochim. Biophys. Acta">
        <title>Nucleotide and deduced amino acid sequence of the hydrophobic surfactant protein SP-C from rat: expression in alveolar type II cells and homology with SP-C from other species.</title>
        <authorList>
            <person name="Fisher J.H."/>
            <person name="Shannon J.M."/>
            <person name="Hatmann T."/>
            <person name="Mason R.J."/>
        </authorList>
    </citation>
    <scope>NUCLEOTIDE SEQUENCE [MRNA]</scope>
    <source>
        <strain>Sprague-Dawley</strain>
        <tissue>Lung</tissue>
    </source>
</reference>
<reference key="2">
    <citation type="submission" date="1994-12" db="EMBL/GenBank/DDBJ databases">
        <authorList>
            <person name="Rishi A.K."/>
            <person name="Gulamhussein A.I."/>
            <person name="Albanese S."/>
            <person name="Williams M.C."/>
            <person name="Brody J.S."/>
        </authorList>
    </citation>
    <scope>NUCLEOTIDE SEQUENCE</scope>
    <source>
        <tissue>Liver</tissue>
    </source>
</reference>
<reference key="3">
    <citation type="journal article" date="2004" name="Genome Res.">
        <title>The status, quality, and expansion of the NIH full-length cDNA project: the Mammalian Gene Collection (MGC).</title>
        <authorList>
            <consortium name="The MGC Project Team"/>
        </authorList>
    </citation>
    <scope>NUCLEOTIDE SEQUENCE [LARGE SCALE MRNA]</scope>
    <source>
        <tissue>Lung</tissue>
    </source>
</reference>
<evidence type="ECO:0000250" key="1"/>
<evidence type="ECO:0000255" key="2">
    <source>
        <dbReference type="PROSITE-ProRule" id="PRU00255"/>
    </source>
</evidence>
<evidence type="ECO:0000256" key="3">
    <source>
        <dbReference type="SAM" id="MobiDB-lite"/>
    </source>
</evidence>
<evidence type="ECO:0000305" key="4"/>
<evidence type="ECO:0000312" key="5">
    <source>
        <dbReference type="RGD" id="3666"/>
    </source>
</evidence>
<proteinExistence type="evidence at transcript level"/>
<accession>P11685</accession>
<accession>Q52MA6</accession>
<name>PSPC_RAT</name>
<feature type="propeptide" id="PRO_0000033492" evidence="1">
    <location>
        <begin position="1"/>
        <end position="23"/>
    </location>
</feature>
<feature type="chain" id="PRO_0000033493" description="Surfactant protein C">
    <location>
        <begin position="24"/>
        <end position="58"/>
    </location>
</feature>
<feature type="propeptide" id="PRO_0000033494">
    <location>
        <begin position="59"/>
        <end position="194"/>
    </location>
</feature>
<feature type="domain" description="BRICHOS" evidence="2">
    <location>
        <begin position="95"/>
        <end position="194"/>
    </location>
</feature>
<feature type="region of interest" description="Disordered" evidence="3">
    <location>
        <begin position="1"/>
        <end position="21"/>
    </location>
</feature>
<feature type="region of interest" description="Disordered" evidence="3">
    <location>
        <begin position="149"/>
        <end position="170"/>
    </location>
</feature>
<feature type="lipid moiety-binding region" description="S-palmitoyl cysteine" evidence="1">
    <location>
        <position position="28"/>
    </location>
</feature>
<feature type="lipid moiety-binding region" description="S-palmitoyl cysteine" evidence="1">
    <location>
        <position position="29"/>
    </location>
</feature>
<feature type="disulfide bond" evidence="1">
    <location>
        <begin position="122"/>
        <end position="186"/>
    </location>
</feature>
<feature type="sequence conflict" description="In Ref. 2; AAA92788." evidence="4" ref="2">
    <original>E</original>
    <variation>V</variation>
    <location>
        <position position="188"/>
    </location>
</feature>
<sequence length="194" mass="21043">MDMGSKEVLMESPPDYSTGPRSQFRIPCCPVHLKRLLIVVVVVVLVVVVIVGALLMGLHMSQKHTEMVLEMSIGGAPETQKRLALSEHTDTIATFSIGSTGIVLYDYQRLLTAYKPAPGTYCYIMKMAPESIPSLEALARKFKNFQAKSSTPTSKLGQEEGHSAGSDSDSSGRDLAFLGLAVSTLCGELPLYYI</sequence>